<reference key="1">
    <citation type="journal article" date="2001" name="Nucleic Acids Res.">
        <title>The dhp1+ gene, encoding a putative nuclear 5'3' exoribonuclease, is required for proper chromosome segregation in fission yeast.</title>
        <authorList>
            <person name="Shobuike T."/>
            <person name="Tatebayashi K."/>
            <person name="Tani T."/>
            <person name="Sugano S."/>
            <person name="Ikeda H."/>
        </authorList>
    </citation>
    <scope>NUCLEOTIDE SEQUENCE [MRNA]</scope>
</reference>
<reference key="2">
    <citation type="journal article" date="2002" name="Nature">
        <title>The genome sequence of Schizosaccharomyces pombe.</title>
        <authorList>
            <person name="Wood V."/>
            <person name="Gwilliam R."/>
            <person name="Rajandream M.A."/>
            <person name="Lyne M.H."/>
            <person name="Lyne R."/>
            <person name="Stewart A."/>
            <person name="Sgouros J.G."/>
            <person name="Peat N."/>
            <person name="Hayles J."/>
            <person name="Baker S.G."/>
            <person name="Basham D."/>
            <person name="Bowman S."/>
            <person name="Brooks K."/>
            <person name="Brown D."/>
            <person name="Brown S."/>
            <person name="Chillingworth T."/>
            <person name="Churcher C.M."/>
            <person name="Collins M."/>
            <person name="Connor R."/>
            <person name="Cronin A."/>
            <person name="Davis P."/>
            <person name="Feltwell T."/>
            <person name="Fraser A."/>
            <person name="Gentles S."/>
            <person name="Goble A."/>
            <person name="Hamlin N."/>
            <person name="Harris D.E."/>
            <person name="Hidalgo J."/>
            <person name="Hodgson G."/>
            <person name="Holroyd S."/>
            <person name="Hornsby T."/>
            <person name="Howarth S."/>
            <person name="Huckle E.J."/>
            <person name="Hunt S."/>
            <person name="Jagels K."/>
            <person name="James K.D."/>
            <person name="Jones L."/>
            <person name="Jones M."/>
            <person name="Leather S."/>
            <person name="McDonald S."/>
            <person name="McLean J."/>
            <person name="Mooney P."/>
            <person name="Moule S."/>
            <person name="Mungall K.L."/>
            <person name="Murphy L.D."/>
            <person name="Niblett D."/>
            <person name="Odell C."/>
            <person name="Oliver K."/>
            <person name="O'Neil S."/>
            <person name="Pearson D."/>
            <person name="Quail M.A."/>
            <person name="Rabbinowitsch E."/>
            <person name="Rutherford K.M."/>
            <person name="Rutter S."/>
            <person name="Saunders D."/>
            <person name="Seeger K."/>
            <person name="Sharp S."/>
            <person name="Skelton J."/>
            <person name="Simmonds M.N."/>
            <person name="Squares R."/>
            <person name="Squares S."/>
            <person name="Stevens K."/>
            <person name="Taylor K."/>
            <person name="Taylor R.G."/>
            <person name="Tivey A."/>
            <person name="Walsh S.V."/>
            <person name="Warren T."/>
            <person name="Whitehead S."/>
            <person name="Woodward J.R."/>
            <person name="Volckaert G."/>
            <person name="Aert R."/>
            <person name="Robben J."/>
            <person name="Grymonprez B."/>
            <person name="Weltjens I."/>
            <person name="Vanstreels E."/>
            <person name="Rieger M."/>
            <person name="Schaefer M."/>
            <person name="Mueller-Auer S."/>
            <person name="Gabel C."/>
            <person name="Fuchs M."/>
            <person name="Duesterhoeft A."/>
            <person name="Fritzc C."/>
            <person name="Holzer E."/>
            <person name="Moestl D."/>
            <person name="Hilbert H."/>
            <person name="Borzym K."/>
            <person name="Langer I."/>
            <person name="Beck A."/>
            <person name="Lehrach H."/>
            <person name="Reinhardt R."/>
            <person name="Pohl T.M."/>
            <person name="Eger P."/>
            <person name="Zimmermann W."/>
            <person name="Wedler H."/>
            <person name="Wambutt R."/>
            <person name="Purnelle B."/>
            <person name="Goffeau A."/>
            <person name="Cadieu E."/>
            <person name="Dreano S."/>
            <person name="Gloux S."/>
            <person name="Lelaure V."/>
            <person name="Mottier S."/>
            <person name="Galibert F."/>
            <person name="Aves S.J."/>
            <person name="Xiang Z."/>
            <person name="Hunt C."/>
            <person name="Moore K."/>
            <person name="Hurst S.M."/>
            <person name="Lucas M."/>
            <person name="Rochet M."/>
            <person name="Gaillardin C."/>
            <person name="Tallada V.A."/>
            <person name="Garzon A."/>
            <person name="Thode G."/>
            <person name="Daga R.R."/>
            <person name="Cruzado L."/>
            <person name="Jimenez J."/>
            <person name="Sanchez M."/>
            <person name="del Rey F."/>
            <person name="Benito J."/>
            <person name="Dominguez A."/>
            <person name="Revuelta J.L."/>
            <person name="Moreno S."/>
            <person name="Armstrong J."/>
            <person name="Forsburg S.L."/>
            <person name="Cerutti L."/>
            <person name="Lowe T."/>
            <person name="McCombie W.R."/>
            <person name="Paulsen I."/>
            <person name="Potashkin J."/>
            <person name="Shpakovski G.V."/>
            <person name="Ussery D."/>
            <person name="Barrell B.G."/>
            <person name="Nurse P."/>
        </authorList>
    </citation>
    <scope>NUCLEOTIDE SEQUENCE [LARGE SCALE GENOMIC DNA]</scope>
    <source>
        <strain>972 / ATCC 24843</strain>
    </source>
</reference>
<reference key="3">
    <citation type="journal article" date="2008" name="J. Proteome Res.">
        <title>Phosphoproteome analysis of fission yeast.</title>
        <authorList>
            <person name="Wilson-Grady J.T."/>
            <person name="Villen J."/>
            <person name="Gygi S.P."/>
        </authorList>
    </citation>
    <scope>PHOSPHORYLATION [LARGE SCALE ANALYSIS] AT SER-218</scope>
    <scope>IDENTIFICATION BY MASS SPECTROMETRY</scope>
</reference>
<reference key="4">
    <citation type="journal article" date="2017" name="Cell">
        <title>5' end nicotinamide adenine dinucleotide cap in human cells promotes RNA decay through DXO-mediated deNADding.</title>
        <authorList>
            <person name="Jiao X."/>
            <person name="Doamekpor S.K."/>
            <person name="Bird J.G."/>
            <person name="Nickels B.E."/>
            <person name="Tong L."/>
            <person name="Hart R.P."/>
            <person name="Kiledjian M."/>
        </authorList>
    </citation>
    <scope>FUNCTION</scope>
    <scope>CATALYTIC ACTIVITY</scope>
    <scope>MUTAGENESIS OF 199-GLU--ASP-201</scope>
</reference>
<reference evidence="10 11" key="5">
    <citation type="journal article" date="2009" name="Nature">
        <title>Structure and function of the 5'--&gt;3' exoribonuclease Rat1 and its activating partner Rai1.</title>
        <authorList>
            <person name="Xiang S."/>
            <person name="Cooper-Morgan A."/>
            <person name="Jiao X."/>
            <person name="Kiledjian M."/>
            <person name="Manley J.L."/>
            <person name="Tong L."/>
        </authorList>
    </citation>
    <scope>X-RAY CRYSTALLOGRAPHY (2.0 ANGSTROMS) IN COMPLEX WITH DHP1</scope>
    <scope>FUNCTION</scope>
    <scope>CATALYTIC ACTIVITY</scope>
    <scope>COFACTOR</scope>
    <scope>INTERACTION WITH DHP1</scope>
    <scope>METAL-BINDING SITES</scope>
    <scope>MUTAGENESIS OF TRP-159; GLU-199; ASP-201 AND LYS-256</scope>
</reference>
<feature type="chain" id="PRO_0000079900" description="Decapping nuclease din1">
    <location>
        <begin position="1"/>
        <end position="352"/>
    </location>
</feature>
<feature type="binding site" evidence="1">
    <location>
        <position position="33"/>
    </location>
    <ligand>
        <name>substrate</name>
    </ligand>
</feature>
<feature type="binding site" evidence="1">
    <location>
        <begin position="93"/>
        <end position="95"/>
    </location>
    <ligand>
        <name>substrate</name>
    </ligand>
</feature>
<feature type="binding site" evidence="5">
    <location>
        <position position="150"/>
    </location>
    <ligand>
        <name>a divalent metal cation</name>
        <dbReference type="ChEBI" id="CHEBI:60240"/>
    </ligand>
</feature>
<feature type="binding site" evidence="1">
    <location>
        <position position="182"/>
    </location>
    <ligand>
        <name>substrate</name>
    </ligand>
</feature>
<feature type="binding site" evidence="1">
    <location>
        <position position="199"/>
    </location>
    <ligand>
        <name>substrate</name>
    </ligand>
</feature>
<feature type="binding site" evidence="5">
    <location>
        <position position="201"/>
    </location>
    <ligand>
        <name>a divalent metal cation</name>
        <dbReference type="ChEBI" id="CHEBI:60240"/>
    </ligand>
</feature>
<feature type="binding site" evidence="5">
    <location>
        <position position="239"/>
    </location>
    <ligand>
        <name>a divalent metal cation</name>
        <dbReference type="ChEBI" id="CHEBI:60240"/>
    </ligand>
</feature>
<feature type="binding site" evidence="5">
    <location>
        <position position="240"/>
    </location>
    <ligand>
        <name>a divalent metal cation</name>
        <dbReference type="ChEBI" id="CHEBI:60240"/>
    </ligand>
</feature>
<feature type="binding site" evidence="1">
    <location>
        <position position="241"/>
    </location>
    <ligand>
        <name>substrate</name>
    </ligand>
</feature>
<feature type="binding site" evidence="1">
    <location>
        <position position="263"/>
    </location>
    <ligand>
        <name>substrate</name>
    </ligand>
</feature>
<feature type="modified residue" description="Phosphoserine" evidence="4">
    <location>
        <position position="218"/>
    </location>
</feature>
<feature type="mutagenesis site" description="Disruption of interaction with dhp1/Rat1." evidence="5">
    <original>W</original>
    <variation>A</variation>
    <location>
        <position position="159"/>
    </location>
</feature>
<feature type="mutagenesis site" description="Abolishes the decapping activity on NAD-cap RNAs." evidence="6">
    <original>EVD</original>
    <variation>AVA</variation>
    <location>
        <begin position="199"/>
        <end position="201"/>
    </location>
</feature>
<feature type="mutagenesis site" description="Loss of pyrophosphohydrolase activity; when associated with A-201." evidence="5">
    <original>E</original>
    <variation>A</variation>
    <location>
        <position position="199"/>
    </location>
</feature>
<feature type="mutagenesis site" description="Loss of pyrophosphohydrolase activity; when associated with A-199." evidence="5">
    <original>D</original>
    <variation>A</variation>
    <location>
        <position position="201"/>
    </location>
</feature>
<feature type="mutagenesis site" description="No detrimental effect on pyrophosphohydrolase activity, dhp1/Rat1 interaction or stimulation of dhp1/Rat1 mediated RNA degradation." evidence="5">
    <original>K</original>
    <variation>A</variation>
    <location>
        <position position="256"/>
    </location>
</feature>
<feature type="strand" evidence="14">
    <location>
        <begin position="2"/>
        <end position="6"/>
    </location>
</feature>
<feature type="helix" evidence="14">
    <location>
        <begin position="7"/>
        <end position="9"/>
    </location>
</feature>
<feature type="strand" evidence="14">
    <location>
        <begin position="22"/>
        <end position="29"/>
    </location>
</feature>
<feature type="strand" evidence="14">
    <location>
        <begin position="35"/>
        <end position="39"/>
    </location>
</feature>
<feature type="strand" evidence="13">
    <location>
        <begin position="43"/>
        <end position="45"/>
    </location>
</feature>
<feature type="turn" evidence="14">
    <location>
        <begin position="54"/>
        <end position="61"/>
    </location>
</feature>
<feature type="helix" evidence="14">
    <location>
        <begin position="73"/>
        <end position="81"/>
    </location>
</feature>
<feature type="strand" evidence="14">
    <location>
        <begin position="88"/>
        <end position="93"/>
    </location>
</feature>
<feature type="helix" evidence="14">
    <location>
        <begin position="94"/>
        <end position="102"/>
    </location>
</feature>
<feature type="turn" evidence="14">
    <location>
        <begin position="103"/>
        <end position="105"/>
    </location>
</feature>
<feature type="strand" evidence="14">
    <location>
        <begin position="111"/>
        <end position="117"/>
    </location>
</feature>
<feature type="turn" evidence="14">
    <location>
        <begin position="119"/>
        <end position="121"/>
    </location>
</feature>
<feature type="strand" evidence="14">
    <location>
        <begin position="124"/>
        <end position="127"/>
    </location>
</feature>
<feature type="helix" evidence="12">
    <location>
        <begin position="134"/>
        <end position="137"/>
    </location>
</feature>
<feature type="helix" evidence="14">
    <location>
        <begin position="141"/>
        <end position="152"/>
    </location>
</feature>
<feature type="strand" evidence="13">
    <location>
        <begin position="154"/>
        <end position="156"/>
    </location>
</feature>
<feature type="helix" evidence="12">
    <location>
        <begin position="159"/>
        <end position="161"/>
    </location>
</feature>
<feature type="helix" evidence="12">
    <location>
        <begin position="164"/>
        <end position="168"/>
    </location>
</feature>
<feature type="helix" evidence="12">
    <location>
        <begin position="170"/>
        <end position="172"/>
    </location>
</feature>
<feature type="strand" evidence="14">
    <location>
        <begin position="180"/>
        <end position="189"/>
    </location>
</feature>
<feature type="strand" evidence="14">
    <location>
        <begin position="192"/>
        <end position="200"/>
    </location>
</feature>
<feature type="strand" evidence="14">
    <location>
        <begin position="202"/>
        <end position="205"/>
    </location>
</feature>
<feature type="helix" evidence="14">
    <location>
        <begin position="234"/>
        <end position="236"/>
    </location>
</feature>
<feature type="strand" evidence="14">
    <location>
        <begin position="237"/>
        <end position="243"/>
    </location>
</feature>
<feature type="helix" evidence="14">
    <location>
        <begin position="251"/>
        <end position="266"/>
    </location>
</feature>
<feature type="strand" evidence="14">
    <location>
        <begin position="271"/>
        <end position="277"/>
    </location>
</feature>
<feature type="strand" evidence="14">
    <location>
        <begin position="281"/>
        <end position="290"/>
    </location>
</feature>
<feature type="helix" evidence="14">
    <location>
        <begin position="293"/>
        <end position="298"/>
    </location>
</feature>
<feature type="helix" evidence="14">
    <location>
        <begin position="299"/>
        <end position="301"/>
    </location>
</feature>
<feature type="helix" evidence="14">
    <location>
        <begin position="309"/>
        <end position="328"/>
    </location>
</feature>
<feature type="strand" evidence="14">
    <location>
        <begin position="335"/>
        <end position="340"/>
    </location>
</feature>
<feature type="strand" evidence="14">
    <location>
        <begin position="345"/>
        <end position="350"/>
    </location>
</feature>
<name>DXO_SCHPO</name>
<protein>
    <recommendedName>
        <fullName evidence="9">Decapping nuclease din1</fullName>
        <ecNumber evidence="5">3.6.1.-</ecNumber>
    </recommendedName>
    <alternativeName>
        <fullName evidence="7">Dhp1-interacting protein 1</fullName>
    </alternativeName>
    <alternativeName>
        <fullName evidence="9">NAD-capped RNA hydrolase Rai1</fullName>
        <shortName evidence="9">DeNADding enzyme Rai1</shortName>
        <shortName evidence="8">spRai1</shortName>
        <ecNumber evidence="6">3.6.1.-</ecNumber>
    </alternativeName>
</protein>
<proteinExistence type="evidence at protein level"/>
<keyword id="KW-0002">3D-structure</keyword>
<keyword id="KW-0378">Hydrolase</keyword>
<keyword id="KW-0479">Metal-binding</keyword>
<keyword id="KW-0507">mRNA processing</keyword>
<keyword id="KW-0540">Nuclease</keyword>
<keyword id="KW-0547">Nucleotide-binding</keyword>
<keyword id="KW-0539">Nucleus</keyword>
<keyword id="KW-0597">Phosphoprotein</keyword>
<keyword id="KW-1185">Reference proteome</keyword>
<keyword id="KW-0694">RNA-binding</keyword>
<organism>
    <name type="scientific">Schizosaccharomyces pombe (strain 972 / ATCC 24843)</name>
    <name type="common">Fission yeast</name>
    <dbReference type="NCBI Taxonomy" id="284812"/>
    <lineage>
        <taxon>Eukaryota</taxon>
        <taxon>Fungi</taxon>
        <taxon>Dikarya</taxon>
        <taxon>Ascomycota</taxon>
        <taxon>Taphrinomycotina</taxon>
        <taxon>Schizosaccharomycetes</taxon>
        <taxon>Schizosaccharomycetales</taxon>
        <taxon>Schizosaccharomycetaceae</taxon>
        <taxon>Schizosaccharomyces</taxon>
    </lineage>
</organism>
<evidence type="ECO:0000250" key="1">
    <source>
        <dbReference type="UniProtKB" id="O70348"/>
    </source>
</evidence>
<evidence type="ECO:0000250" key="2">
    <source>
        <dbReference type="UniProtKB" id="P53063"/>
    </source>
</evidence>
<evidence type="ECO:0000250" key="3">
    <source>
        <dbReference type="UniProtKB" id="Q06349"/>
    </source>
</evidence>
<evidence type="ECO:0000269" key="4">
    <source>
    </source>
</evidence>
<evidence type="ECO:0000269" key="5">
    <source>
    </source>
</evidence>
<evidence type="ECO:0000269" key="6">
    <source>
    </source>
</evidence>
<evidence type="ECO:0000303" key="7">
    <source>
    </source>
</evidence>
<evidence type="ECO:0000303" key="8">
    <source>
    </source>
</evidence>
<evidence type="ECO:0000305" key="9"/>
<evidence type="ECO:0000312" key="10">
    <source>
        <dbReference type="PDB" id="3FQD"/>
    </source>
</evidence>
<evidence type="ECO:0000312" key="11">
    <source>
        <dbReference type="PDB" id="3FQG"/>
    </source>
</evidence>
<evidence type="ECO:0007829" key="12">
    <source>
        <dbReference type="PDB" id="3FQD"/>
    </source>
</evidence>
<evidence type="ECO:0007829" key="13">
    <source>
        <dbReference type="PDB" id="3FQG"/>
    </source>
</evidence>
<evidence type="ECO:0007829" key="14">
    <source>
        <dbReference type="PDB" id="6WUI"/>
    </source>
</evidence>
<sequence>MLREFSFYDVPPAHVPPVSEPLEIACYSLSRDRELLLDDSKLSYYYPPPLFSDLNTGFPNRFHPPKSDPDPISIVKDVLMTKGIQMNSSFLTWRGLITKIMCAPLDPRNHWETYLVMDPTSGIIMMEERTRSETSYANQDRMCYWGYKFEAISTLPEIWDACSRDQIEQRDNQDVVPDEQYCSIVKINIGKSKLILAGEVDCIWDKKPCSAKESDVHSDDGTIEEDASNAENPNLHYVELKTSKKYPLENYGMRKKLLKYWAQSFLLGIGRIIIGFRDDNGILIEMKELFTHQIPKMLRPYFKPNDWTPNRLLVVLEHALEWIKQTVKQHPPSTEFTLSYTGGSKLVLRQII</sequence>
<gene>
    <name evidence="7" type="primary">din1</name>
    <name evidence="8" type="synonym">rai1</name>
    <name type="ORF">SPAC19D5.06c</name>
</gene>
<accession>O13836</accession>
<dbReference type="EC" id="3.6.1.-" evidence="5 6"/>
<dbReference type="EMBL" id="AB045607">
    <property type="protein sequence ID" value="BAB20823.1"/>
    <property type="molecule type" value="mRNA"/>
</dbReference>
<dbReference type="EMBL" id="CU329670">
    <property type="protein sequence ID" value="CAB16716.1"/>
    <property type="molecule type" value="Genomic_DNA"/>
</dbReference>
<dbReference type="PIR" id="T37966">
    <property type="entry name" value="T37966"/>
</dbReference>
<dbReference type="RefSeq" id="NP_594904.1">
    <property type="nucleotide sequence ID" value="NM_001020334.2"/>
</dbReference>
<dbReference type="PDB" id="3FQD">
    <property type="method" value="X-ray"/>
    <property type="resolution" value="2.20 A"/>
    <property type="chains" value="B=1-352"/>
</dbReference>
<dbReference type="PDB" id="3FQG">
    <property type="method" value="X-ray"/>
    <property type="resolution" value="2.00 A"/>
    <property type="chains" value="A=1-352"/>
</dbReference>
<dbReference type="PDB" id="6WUG">
    <property type="method" value="X-ray"/>
    <property type="resolution" value="1.90 A"/>
    <property type="chains" value="A=1-352"/>
</dbReference>
<dbReference type="PDB" id="6WUI">
    <property type="method" value="X-ray"/>
    <property type="resolution" value="1.90 A"/>
    <property type="chains" value="A=1-352"/>
</dbReference>
<dbReference type="PDBsum" id="3FQD"/>
<dbReference type="PDBsum" id="3FQG"/>
<dbReference type="PDBsum" id="6WUG"/>
<dbReference type="PDBsum" id="6WUI"/>
<dbReference type="SMR" id="O13836"/>
<dbReference type="BioGRID" id="278997">
    <property type="interactions" value="7"/>
</dbReference>
<dbReference type="DIP" id="DIP-59744N"/>
<dbReference type="FunCoup" id="O13836">
    <property type="interactions" value="297"/>
</dbReference>
<dbReference type="IntAct" id="O13836">
    <property type="interactions" value="1"/>
</dbReference>
<dbReference type="STRING" id="284812.O13836"/>
<dbReference type="iPTMnet" id="O13836"/>
<dbReference type="PaxDb" id="4896-SPAC19D5.06c.1"/>
<dbReference type="EnsemblFungi" id="SPAC19D5.06c.1">
    <property type="protein sequence ID" value="SPAC19D5.06c.1:pep"/>
    <property type="gene ID" value="SPAC19D5.06c"/>
</dbReference>
<dbReference type="GeneID" id="2542540"/>
<dbReference type="KEGG" id="spo:2542540"/>
<dbReference type="PomBase" id="SPAC19D5.06c">
    <property type="gene designation" value="din1"/>
</dbReference>
<dbReference type="VEuPathDB" id="FungiDB:SPAC19D5.06c"/>
<dbReference type="eggNOG" id="KOG1982">
    <property type="taxonomic scope" value="Eukaryota"/>
</dbReference>
<dbReference type="HOGENOM" id="CLU_024877_4_1_1"/>
<dbReference type="InParanoid" id="O13836"/>
<dbReference type="OMA" id="VVTWRGH"/>
<dbReference type="PhylomeDB" id="O13836"/>
<dbReference type="EvolutionaryTrace" id="O13836"/>
<dbReference type="PRO" id="PR:O13836"/>
<dbReference type="Proteomes" id="UP000002485">
    <property type="component" value="Chromosome I"/>
</dbReference>
<dbReference type="GO" id="GO:0005829">
    <property type="term" value="C:cytosol"/>
    <property type="evidence" value="ECO:0007005"/>
    <property type="project" value="PomBase"/>
</dbReference>
<dbReference type="GO" id="GO:0090730">
    <property type="term" value="C:Las1 complex"/>
    <property type="evidence" value="ECO:0000266"/>
    <property type="project" value="PomBase"/>
</dbReference>
<dbReference type="GO" id="GO:0005634">
    <property type="term" value="C:nucleus"/>
    <property type="evidence" value="ECO:0007005"/>
    <property type="project" value="PomBase"/>
</dbReference>
<dbReference type="GO" id="GO:0140432">
    <property type="term" value="F:5'-hydroxyl dinucleotide hydrolase activity"/>
    <property type="evidence" value="ECO:0000314"/>
    <property type="project" value="PomBase"/>
</dbReference>
<dbReference type="GO" id="GO:0019003">
    <property type="term" value="F:GDP binding"/>
    <property type="evidence" value="ECO:0000314"/>
    <property type="project" value="PomBase"/>
</dbReference>
<dbReference type="GO" id="GO:0046872">
    <property type="term" value="F:metal ion binding"/>
    <property type="evidence" value="ECO:0007669"/>
    <property type="project" value="UniProtKB-KW"/>
</dbReference>
<dbReference type="GO" id="GO:0034353">
    <property type="term" value="F:mRNA 5'-diphosphatase activity"/>
    <property type="evidence" value="ECO:0000314"/>
    <property type="project" value="PomBase"/>
</dbReference>
<dbReference type="GO" id="GO:1990174">
    <property type="term" value="F:phosphodiesterase decapping endonuclease activity"/>
    <property type="evidence" value="ECO:0000314"/>
    <property type="project" value="PomBase"/>
</dbReference>
<dbReference type="GO" id="GO:0003723">
    <property type="term" value="F:RNA binding"/>
    <property type="evidence" value="ECO:0007669"/>
    <property type="project" value="UniProtKB-KW"/>
</dbReference>
<dbReference type="GO" id="GO:0110152">
    <property type="term" value="F:RNA NAD+-cap (NAD+-forming) hydrolase activity"/>
    <property type="evidence" value="ECO:0000314"/>
    <property type="project" value="UniProtKB"/>
</dbReference>
<dbReference type="GO" id="GO:0000448">
    <property type="term" value="P:cleavage in ITS2 between 5.8S rRNA and LSU-rRNA of tricistronic rRNA transcript (SSU-rRNA, 5.8S rRNA, LSU-rRNA)"/>
    <property type="evidence" value="ECO:0000305"/>
    <property type="project" value="PomBase"/>
</dbReference>
<dbReference type="GO" id="GO:0006397">
    <property type="term" value="P:mRNA processing"/>
    <property type="evidence" value="ECO:0007669"/>
    <property type="project" value="UniProtKB-KW"/>
</dbReference>
<dbReference type="GO" id="GO:0110155">
    <property type="term" value="P:NAD-cap decapping"/>
    <property type="evidence" value="ECO:0000314"/>
    <property type="project" value="UniProtKB"/>
</dbReference>
<dbReference type="GO" id="GO:0000956">
    <property type="term" value="P:nuclear-transcribed mRNA catabolic process"/>
    <property type="evidence" value="ECO:0000314"/>
    <property type="project" value="PomBase"/>
</dbReference>
<dbReference type="InterPro" id="IPR013961">
    <property type="entry name" value="RAI1"/>
</dbReference>
<dbReference type="InterPro" id="IPR039039">
    <property type="entry name" value="RAI1-like_fam"/>
</dbReference>
<dbReference type="PANTHER" id="PTHR12395:SF9">
    <property type="entry name" value="DECAPPING AND EXORIBONUCLEASE PROTEIN"/>
    <property type="match status" value="1"/>
</dbReference>
<dbReference type="PANTHER" id="PTHR12395">
    <property type="entry name" value="DOM-3 RELATED"/>
    <property type="match status" value="1"/>
</dbReference>
<dbReference type="Pfam" id="PF08652">
    <property type="entry name" value="RAI1"/>
    <property type="match status" value="1"/>
</dbReference>
<comment type="function">
    <text evidence="1 3 5 6">Decapping enzyme for NAD-capped RNAs: specifically hydrolyzes the nicotinamide adenine dinucleotide (NAD) cap from a subset of RNAs by removing the entire NAD moiety from the 5'-end of an NAD-capped RNA (PubMed:28283058). The NAD-cap is present at the 5'-end of some RNAs and snoRNAs (By similarity). In contrast to the canonical 5'-end N7 methylguanosine (m7G) cap, the NAD cap promotes mRNA decay (By similarity). Also acts as a non-canonical decapping enzyme that removes the entire cap structure of m7G capped or incompletely capped RNAs and mediates their subsequent degradation (PubMed:28283058). Specifically degrades pre-mRNAs with a defective m7G cap and is part of a pre-mRNA capping quality control (PubMed:28283058). Has decapping activity toward incomplete 5'-end m7G cap mRNAs such as unmethylated 5'-end-capped RNA (cap0), while it has no activity toward 2'-O-ribose methylated m7G cap (cap1) (PubMed:28283058). Also possesses RNA 5'-pyrophosphohydrolase activity by hydrolyzing the 5'-end triphosphate to release pyrophosphates (PubMed:19194460). Stimulates exoribonuclease activity of dhp1, allowing it to degrade RNAs with stable secondary structure more effectively (PubMed:19194460).</text>
</comment>
<comment type="catalytic activity">
    <reaction evidence="6">
        <text>a 5'-end NAD(+)-phospho-ribonucleoside in mRNA + H2O = a 5'-end phospho-ribonucleoside in mRNA + NAD(+) + H(+)</text>
        <dbReference type="Rhea" id="RHEA:60880"/>
        <dbReference type="Rhea" id="RHEA-COMP:15692"/>
        <dbReference type="Rhea" id="RHEA-COMP:15698"/>
        <dbReference type="ChEBI" id="CHEBI:15377"/>
        <dbReference type="ChEBI" id="CHEBI:15378"/>
        <dbReference type="ChEBI" id="CHEBI:57540"/>
        <dbReference type="ChEBI" id="CHEBI:138282"/>
        <dbReference type="ChEBI" id="CHEBI:144029"/>
    </reaction>
    <physiologicalReaction direction="left-to-right" evidence="6">
        <dbReference type="Rhea" id="RHEA:60881"/>
    </physiologicalReaction>
</comment>
<comment type="catalytic activity">
    <reaction evidence="2">
        <text>a 5'-end (N(7)-methyl 5'-triphosphoguanosine)-ribonucleoside-ribonucleotide in mRNA + H2O = a (N(7)-methyl 5'-triphosphoguanosine)-nucleoside + a 5'-end phospho-ribonucleoside in mRNA + H(+)</text>
        <dbReference type="Rhea" id="RHEA:66928"/>
        <dbReference type="Rhea" id="RHEA-COMP:15692"/>
        <dbReference type="Rhea" id="RHEA-COMP:17313"/>
        <dbReference type="ChEBI" id="CHEBI:15377"/>
        <dbReference type="ChEBI" id="CHEBI:15378"/>
        <dbReference type="ChEBI" id="CHEBI:138282"/>
        <dbReference type="ChEBI" id="CHEBI:172876"/>
        <dbReference type="ChEBI" id="CHEBI:172877"/>
    </reaction>
    <physiologicalReaction direction="left-to-right" evidence="2">
        <dbReference type="Rhea" id="RHEA:66929"/>
    </physiologicalReaction>
</comment>
<comment type="catalytic activity">
    <reaction evidence="5">
        <text>a 5'-end triphospho-ribonucleoside in mRNA + H2O = a 5'-end phospho-ribonucleoside in mRNA + diphosphate + H(+)</text>
        <dbReference type="Rhea" id="RHEA:78683"/>
        <dbReference type="Rhea" id="RHEA-COMP:15692"/>
        <dbReference type="Rhea" id="RHEA-COMP:17164"/>
        <dbReference type="ChEBI" id="CHEBI:15377"/>
        <dbReference type="ChEBI" id="CHEBI:15378"/>
        <dbReference type="ChEBI" id="CHEBI:33019"/>
        <dbReference type="ChEBI" id="CHEBI:138282"/>
        <dbReference type="ChEBI" id="CHEBI:167618"/>
    </reaction>
    <physiologicalReaction direction="left-to-right" evidence="5">
        <dbReference type="Rhea" id="RHEA:78684"/>
    </physiologicalReaction>
</comment>
<comment type="cofactor">
    <cofactor evidence="5">
        <name>a divalent metal cation</name>
        <dbReference type="ChEBI" id="CHEBI:60240"/>
    </cofactor>
    <text evidence="5">Divalent metal cation.</text>
</comment>
<comment type="subunit">
    <text evidence="5">Interacts with dhp1/Rat1; the interaction is direct, stabilizes dhp1 protein structure and stimulates its exoribonuclease activity (PubMed:19194460). The interaction also stimulates din1 pyrophosphohydrolase activity, probably by recruiting it to mRNA substrates (PubMed:19194460).</text>
</comment>
<comment type="interaction">
    <interactant intactId="EBI-15755601">
        <id>O13836</id>
    </interactant>
    <interactant intactId="EBI-15755578">
        <id>P40848</id>
        <label>dhp1</label>
    </interactant>
    <organismsDiffer>false</organismsDiffer>
    <experiments>2</experiments>
</comment>
<comment type="subcellular location">
    <subcellularLocation>
        <location evidence="2">Nucleus</location>
    </subcellularLocation>
</comment>
<comment type="similarity">
    <text evidence="9">Belongs to the DXO/Dom3Z family.</text>
</comment>